<organism>
    <name type="scientific">Mycolicibacterium paratuberculosis (strain ATCC BAA-968 / K-10)</name>
    <name type="common">Mycobacterium paratuberculosis</name>
    <dbReference type="NCBI Taxonomy" id="262316"/>
    <lineage>
        <taxon>Bacteria</taxon>
        <taxon>Bacillati</taxon>
        <taxon>Actinomycetota</taxon>
        <taxon>Actinomycetes</taxon>
        <taxon>Mycobacteriales</taxon>
        <taxon>Mycobacteriaceae</taxon>
        <taxon>Mycobacterium</taxon>
        <taxon>Mycobacterium avium complex (MAC)</taxon>
    </lineage>
</organism>
<evidence type="ECO:0000255" key="1">
    <source>
        <dbReference type="HAMAP-Rule" id="MF_01014"/>
    </source>
</evidence>
<gene>
    <name evidence="1" type="primary">priA</name>
    <name evidence="1" type="synonym">hisA</name>
    <name type="ordered locus">MAP_1297</name>
</gene>
<dbReference type="EC" id="5.3.1.16" evidence="1"/>
<dbReference type="EC" id="5.3.1.24" evidence="1"/>
<dbReference type="EMBL" id="AE016958">
    <property type="protein sequence ID" value="AAS03614.1"/>
    <property type="molecule type" value="Genomic_DNA"/>
</dbReference>
<dbReference type="RefSeq" id="WP_003876209.1">
    <property type="nucleotide sequence ID" value="NZ_CP106873.1"/>
</dbReference>
<dbReference type="SMR" id="P60583"/>
<dbReference type="STRING" id="262316.MAP_1297"/>
<dbReference type="KEGG" id="mpa:MAP_1297"/>
<dbReference type="PATRIC" id="fig|262316.17.peg.1366"/>
<dbReference type="eggNOG" id="COG0106">
    <property type="taxonomic scope" value="Bacteria"/>
</dbReference>
<dbReference type="HOGENOM" id="CLU_048577_1_1_11"/>
<dbReference type="UniPathway" id="UPA00031">
    <property type="reaction ID" value="UER00009"/>
</dbReference>
<dbReference type="UniPathway" id="UPA00035">
    <property type="reaction ID" value="UER00042"/>
</dbReference>
<dbReference type="Proteomes" id="UP000000580">
    <property type="component" value="Chromosome"/>
</dbReference>
<dbReference type="GO" id="GO:0005737">
    <property type="term" value="C:cytoplasm"/>
    <property type="evidence" value="ECO:0007669"/>
    <property type="project" value="UniProtKB-SubCell"/>
</dbReference>
<dbReference type="GO" id="GO:0003949">
    <property type="term" value="F:1-(5-phosphoribosyl)-5-[(5-phosphoribosylamino)methylideneamino]imidazole-4-carboxamide isomerase activity"/>
    <property type="evidence" value="ECO:0007669"/>
    <property type="project" value="UniProtKB-UniRule"/>
</dbReference>
<dbReference type="GO" id="GO:0004640">
    <property type="term" value="F:phosphoribosylanthranilate isomerase activity"/>
    <property type="evidence" value="ECO:0007669"/>
    <property type="project" value="UniProtKB-UniRule"/>
</dbReference>
<dbReference type="GO" id="GO:0000105">
    <property type="term" value="P:L-histidine biosynthetic process"/>
    <property type="evidence" value="ECO:0007669"/>
    <property type="project" value="UniProtKB-UniRule"/>
</dbReference>
<dbReference type="GO" id="GO:0000162">
    <property type="term" value="P:L-tryptophan biosynthetic process"/>
    <property type="evidence" value="ECO:0007669"/>
    <property type="project" value="UniProtKB-UniRule"/>
</dbReference>
<dbReference type="CDD" id="cd04732">
    <property type="entry name" value="HisA"/>
    <property type="match status" value="1"/>
</dbReference>
<dbReference type="FunFam" id="3.20.20.70:FF:000009">
    <property type="entry name" value="1-(5-phosphoribosyl)-5-[(5-phosphoribosylamino)methylideneamino] imidazole-4-carboxamide isomerase"/>
    <property type="match status" value="1"/>
</dbReference>
<dbReference type="Gene3D" id="3.20.20.70">
    <property type="entry name" value="Aldolase class I"/>
    <property type="match status" value="1"/>
</dbReference>
<dbReference type="HAMAP" id="MF_01014">
    <property type="entry name" value="HisA"/>
    <property type="match status" value="1"/>
</dbReference>
<dbReference type="InterPro" id="IPR013785">
    <property type="entry name" value="Aldolase_TIM"/>
</dbReference>
<dbReference type="InterPro" id="IPR006062">
    <property type="entry name" value="His_biosynth"/>
</dbReference>
<dbReference type="InterPro" id="IPR010188">
    <property type="entry name" value="HisA/PriA_Actinobacteria"/>
</dbReference>
<dbReference type="InterPro" id="IPR044524">
    <property type="entry name" value="Isoase_HisA-like"/>
</dbReference>
<dbReference type="InterPro" id="IPR023016">
    <property type="entry name" value="Isoase_HisA-like_bact"/>
</dbReference>
<dbReference type="InterPro" id="IPR011060">
    <property type="entry name" value="RibuloseP-bd_barrel"/>
</dbReference>
<dbReference type="NCBIfam" id="TIGR01919">
    <property type="entry name" value="hisA-trpF"/>
    <property type="match status" value="1"/>
</dbReference>
<dbReference type="PANTHER" id="PTHR43090">
    <property type="entry name" value="1-(5-PHOSPHORIBOSYL)-5-[(5-PHOSPHORIBOSYLAMINO)METHYLIDENEAMINO] IMIDAZOLE-4-CARBOXAMIDE ISOMERASE"/>
    <property type="match status" value="1"/>
</dbReference>
<dbReference type="PANTHER" id="PTHR43090:SF2">
    <property type="entry name" value="1-(5-PHOSPHORIBOSYL)-5-[(5-PHOSPHORIBOSYLAMINO)METHYLIDENEAMINO] IMIDAZOLE-4-CARBOXAMIDE ISOMERASE"/>
    <property type="match status" value="1"/>
</dbReference>
<dbReference type="Pfam" id="PF00977">
    <property type="entry name" value="His_biosynth"/>
    <property type="match status" value="1"/>
</dbReference>
<dbReference type="SUPFAM" id="SSF51366">
    <property type="entry name" value="Ribulose-phoshate binding barrel"/>
    <property type="match status" value="1"/>
</dbReference>
<comment type="function">
    <text evidence="1">Involved in both the histidine and tryptophan biosynthetic pathways.</text>
</comment>
<comment type="catalytic activity">
    <reaction evidence="1">
        <text>1-(5-phospho-beta-D-ribosyl)-5-[(5-phospho-beta-D-ribosylamino)methylideneamino]imidazole-4-carboxamide = 5-[(5-phospho-1-deoxy-D-ribulos-1-ylimino)methylamino]-1-(5-phospho-beta-D-ribosyl)imidazole-4-carboxamide</text>
        <dbReference type="Rhea" id="RHEA:15469"/>
        <dbReference type="ChEBI" id="CHEBI:58435"/>
        <dbReference type="ChEBI" id="CHEBI:58525"/>
        <dbReference type="EC" id="5.3.1.16"/>
    </reaction>
</comment>
<comment type="catalytic activity">
    <reaction evidence="1">
        <text>N-(5-phospho-beta-D-ribosyl)anthranilate = 1-(2-carboxyphenylamino)-1-deoxy-D-ribulose 5-phosphate</text>
        <dbReference type="Rhea" id="RHEA:21540"/>
        <dbReference type="ChEBI" id="CHEBI:18277"/>
        <dbReference type="ChEBI" id="CHEBI:58613"/>
        <dbReference type="EC" id="5.3.1.24"/>
    </reaction>
</comment>
<comment type="pathway">
    <text evidence="1">Amino-acid biosynthesis; L-histidine biosynthesis; L-histidine from 5-phospho-alpha-D-ribose 1-diphosphate: step 4/9.</text>
</comment>
<comment type="pathway">
    <text evidence="1">Amino-acid biosynthesis; L-tryptophan biosynthesis; L-tryptophan from chorismate: step 3/5.</text>
</comment>
<comment type="subcellular location">
    <subcellularLocation>
        <location evidence="1">Cytoplasm</location>
    </subcellularLocation>
</comment>
<comment type="similarity">
    <text evidence="1">Belongs to the HisA/HisF family.</text>
</comment>
<keyword id="KW-0028">Amino-acid biosynthesis</keyword>
<keyword id="KW-0057">Aromatic amino acid biosynthesis</keyword>
<keyword id="KW-0963">Cytoplasm</keyword>
<keyword id="KW-0368">Histidine biosynthesis</keyword>
<keyword id="KW-0413">Isomerase</keyword>
<keyword id="KW-1185">Reference proteome</keyword>
<keyword id="KW-0822">Tryptophan biosynthesis</keyword>
<sequence>MLILLPAVDVVDGRAVRLVQGKAGSETEYGSALDAALGWQRDGAEWIHLVDLDAAFGRGSNRELLAEVVGKLDVRVELSGGIRDDDSLAAALATGCARVNLGTAALENPQWCARAIGEHGDKVAVGLDVQIIDGQHRLRGRGWETDGGDLWEVLERLERQGCSRYVVTDVTKDGTLGGPNLDLLGAVADRTDAPVIASGGVSSLDDLRAIATLTGRGVEGAIVGKALYAGRFTLPQALAAVAE</sequence>
<reference key="1">
    <citation type="journal article" date="2005" name="Proc. Natl. Acad. Sci. U.S.A.">
        <title>The complete genome sequence of Mycobacterium avium subspecies paratuberculosis.</title>
        <authorList>
            <person name="Li L."/>
            <person name="Bannantine J.P."/>
            <person name="Zhang Q."/>
            <person name="Amonsin A."/>
            <person name="May B.J."/>
            <person name="Alt D."/>
            <person name="Banerji N."/>
            <person name="Kanjilal S."/>
            <person name="Kapur V."/>
        </authorList>
    </citation>
    <scope>NUCLEOTIDE SEQUENCE [LARGE SCALE GENOMIC DNA]</scope>
    <source>
        <strain>ATCC BAA-968 / K-10</strain>
    </source>
</reference>
<accession>P60583</accession>
<name>HIS4_MYCPA</name>
<protein>
    <recommendedName>
        <fullName evidence="1">Phosphoribosyl isomerase A</fullName>
    </recommendedName>
    <alternativeName>
        <fullName evidence="1">1-(5-phosphoribosyl)-5-[(5-phosphoribosylamino)methylideneamino] imidazole-4-carboxamide isomerase</fullName>
        <ecNumber evidence="1">5.3.1.16</ecNumber>
    </alternativeName>
    <alternativeName>
        <fullName evidence="1">N-(5'-phosphoribosyl)anthranilate isomerase</fullName>
        <shortName evidence="1">PRAI</shortName>
        <ecNumber evidence="1">5.3.1.24</ecNumber>
    </alternativeName>
    <alternativeName>
        <fullName evidence="1">Phosphoribosylformimino-5-aminoimidazole carboxamide ribotide isomerase</fullName>
    </alternativeName>
</protein>
<proteinExistence type="inferred from homology"/>
<feature type="chain" id="PRO_0000142084" description="Phosphoribosyl isomerase A">
    <location>
        <begin position="1"/>
        <end position="243"/>
    </location>
</feature>
<feature type="active site" description="Proton acceptor" evidence="1">
    <location>
        <position position="9"/>
    </location>
</feature>
<feature type="active site" description="Proton donor" evidence="1">
    <location>
        <position position="128"/>
    </location>
</feature>